<proteinExistence type="evidence at transcript level"/>
<dbReference type="EMBL" id="U66319">
    <property type="protein sequence ID" value="AAB07482.1"/>
    <property type="molecule type" value="mRNA"/>
</dbReference>
<dbReference type="SMR" id="Q94571"/>
<dbReference type="OrthoDB" id="1662883at2759"/>
<dbReference type="GO" id="GO:0005737">
    <property type="term" value="C:cytoplasm"/>
    <property type="evidence" value="ECO:0007669"/>
    <property type="project" value="UniProtKB-KW"/>
</dbReference>
<dbReference type="GO" id="GO:0005874">
    <property type="term" value="C:microtubule"/>
    <property type="evidence" value="ECO:0007669"/>
    <property type="project" value="UniProtKB-KW"/>
</dbReference>
<dbReference type="GO" id="GO:0005525">
    <property type="term" value="F:GTP binding"/>
    <property type="evidence" value="ECO:0007669"/>
    <property type="project" value="UniProtKB-KW"/>
</dbReference>
<dbReference type="GO" id="GO:0003924">
    <property type="term" value="F:GTPase activity"/>
    <property type="evidence" value="ECO:0007669"/>
    <property type="project" value="InterPro"/>
</dbReference>
<dbReference type="GO" id="GO:0046872">
    <property type="term" value="F:metal ion binding"/>
    <property type="evidence" value="ECO:0007669"/>
    <property type="project" value="UniProtKB-KW"/>
</dbReference>
<dbReference type="GO" id="GO:0005200">
    <property type="term" value="F:structural constituent of cytoskeleton"/>
    <property type="evidence" value="ECO:0007669"/>
    <property type="project" value="InterPro"/>
</dbReference>
<dbReference type="GO" id="GO:0007017">
    <property type="term" value="P:microtubule-based process"/>
    <property type="evidence" value="ECO:0007669"/>
    <property type="project" value="InterPro"/>
</dbReference>
<dbReference type="CDD" id="cd02187">
    <property type="entry name" value="beta_tubulin"/>
    <property type="match status" value="1"/>
</dbReference>
<dbReference type="FunFam" id="1.10.287.600:FF:000006">
    <property type="entry name" value="Tubulin beta chain"/>
    <property type="match status" value="1"/>
</dbReference>
<dbReference type="FunFam" id="3.30.1330.20:FF:000002">
    <property type="entry name" value="Tubulin beta chain"/>
    <property type="match status" value="1"/>
</dbReference>
<dbReference type="FunFam" id="3.40.50.1440:FF:000003">
    <property type="entry name" value="Tubulin beta chain"/>
    <property type="match status" value="1"/>
</dbReference>
<dbReference type="Gene3D" id="1.10.287.600">
    <property type="entry name" value="Helix hairpin bin"/>
    <property type="match status" value="1"/>
</dbReference>
<dbReference type="Gene3D" id="3.30.1330.20">
    <property type="entry name" value="Tubulin/FtsZ, C-terminal domain"/>
    <property type="match status" value="1"/>
</dbReference>
<dbReference type="Gene3D" id="3.40.50.1440">
    <property type="entry name" value="Tubulin/FtsZ, GTPase domain"/>
    <property type="match status" value="1"/>
</dbReference>
<dbReference type="InterPro" id="IPR013838">
    <property type="entry name" value="Beta-tubulin_BS"/>
</dbReference>
<dbReference type="InterPro" id="IPR002453">
    <property type="entry name" value="Beta_tubulin"/>
</dbReference>
<dbReference type="InterPro" id="IPR008280">
    <property type="entry name" value="Tub_FtsZ_C"/>
</dbReference>
<dbReference type="InterPro" id="IPR000217">
    <property type="entry name" value="Tubulin"/>
</dbReference>
<dbReference type="InterPro" id="IPR037103">
    <property type="entry name" value="Tubulin/FtsZ-like_C"/>
</dbReference>
<dbReference type="InterPro" id="IPR018316">
    <property type="entry name" value="Tubulin/FtsZ_2-layer-sand-dom"/>
</dbReference>
<dbReference type="InterPro" id="IPR036525">
    <property type="entry name" value="Tubulin/FtsZ_GTPase_sf"/>
</dbReference>
<dbReference type="InterPro" id="IPR023123">
    <property type="entry name" value="Tubulin_C"/>
</dbReference>
<dbReference type="InterPro" id="IPR003008">
    <property type="entry name" value="Tubulin_FtsZ_GTPase"/>
</dbReference>
<dbReference type="PANTHER" id="PTHR11588">
    <property type="entry name" value="TUBULIN"/>
    <property type="match status" value="1"/>
</dbReference>
<dbReference type="Pfam" id="PF00091">
    <property type="entry name" value="Tubulin"/>
    <property type="match status" value="1"/>
</dbReference>
<dbReference type="Pfam" id="PF03953">
    <property type="entry name" value="Tubulin_C"/>
    <property type="match status" value="1"/>
</dbReference>
<dbReference type="PRINTS" id="PR01163">
    <property type="entry name" value="BETATUBULIN"/>
</dbReference>
<dbReference type="PRINTS" id="PR01161">
    <property type="entry name" value="TUBULIN"/>
</dbReference>
<dbReference type="SMART" id="SM00864">
    <property type="entry name" value="Tubulin"/>
    <property type="match status" value="1"/>
</dbReference>
<dbReference type="SMART" id="SM00865">
    <property type="entry name" value="Tubulin_C"/>
    <property type="match status" value="1"/>
</dbReference>
<dbReference type="SUPFAM" id="SSF55307">
    <property type="entry name" value="Tubulin C-terminal domain-like"/>
    <property type="match status" value="1"/>
</dbReference>
<dbReference type="SUPFAM" id="SSF52490">
    <property type="entry name" value="Tubulin nucleotide-binding domain-like"/>
    <property type="match status" value="1"/>
</dbReference>
<dbReference type="PROSITE" id="PS00228">
    <property type="entry name" value="TUBULIN_B_AUTOREG"/>
    <property type="match status" value="1"/>
</dbReference>
<evidence type="ECO:0000250" key="1">
    <source>
        <dbReference type="UniProtKB" id="P68363"/>
    </source>
</evidence>
<evidence type="ECO:0000250" key="2">
    <source>
        <dbReference type="UniProtKB" id="Q13509"/>
    </source>
</evidence>
<evidence type="ECO:0000256" key="3">
    <source>
        <dbReference type="SAM" id="MobiDB-lite"/>
    </source>
</evidence>
<evidence type="ECO:0000305" key="4"/>
<protein>
    <recommendedName>
        <fullName>Tubulin beta-2 chain</fullName>
    </recommendedName>
    <alternativeName>
        <fullName>Beta-II tubulin</fullName>
    </alternativeName>
</protein>
<name>TBB2_HOMAM</name>
<organism>
    <name type="scientific">Homarus americanus</name>
    <name type="common">American lobster</name>
    <dbReference type="NCBI Taxonomy" id="6706"/>
    <lineage>
        <taxon>Eukaryota</taxon>
        <taxon>Metazoa</taxon>
        <taxon>Ecdysozoa</taxon>
        <taxon>Arthropoda</taxon>
        <taxon>Crustacea</taxon>
        <taxon>Multicrustacea</taxon>
        <taxon>Malacostraca</taxon>
        <taxon>Eumalacostraca</taxon>
        <taxon>Eucarida</taxon>
        <taxon>Decapoda</taxon>
        <taxon>Pleocyemata</taxon>
        <taxon>Astacidea</taxon>
        <taxon>Nephropoidea</taxon>
        <taxon>Nephropidae</taxon>
        <taxon>Homarus</taxon>
    </lineage>
</organism>
<reference key="1">
    <citation type="journal article" date="1996" name="Gene">
        <title>Multiple lobster tubulin isoforms are encoded by a simple gene family.</title>
        <authorList>
            <person name="Demers D.M."/>
            <person name="Metcalf A.E."/>
            <person name="Talbot P."/>
            <person name="Hyman B.C."/>
        </authorList>
    </citation>
    <scope>NUCLEOTIDE SEQUENCE [MRNA]</scope>
</reference>
<feature type="chain" id="PRO_0000048274" description="Tubulin beta-2 chain">
    <location>
        <begin position="1"/>
        <end position="452"/>
    </location>
</feature>
<feature type="region of interest" description="Disordered" evidence="3">
    <location>
        <begin position="431"/>
        <end position="452"/>
    </location>
</feature>
<feature type="compositionally biased region" description="Acidic residues" evidence="3">
    <location>
        <begin position="434"/>
        <end position="452"/>
    </location>
</feature>
<feature type="binding site" evidence="2">
    <location>
        <position position="11"/>
    </location>
    <ligand>
        <name>GTP</name>
        <dbReference type="ChEBI" id="CHEBI:37565"/>
    </ligand>
</feature>
<feature type="binding site" evidence="1">
    <location>
        <position position="74"/>
    </location>
    <ligand>
        <name>GTP</name>
        <dbReference type="ChEBI" id="CHEBI:37565"/>
    </ligand>
</feature>
<feature type="binding site" evidence="1">
    <location>
        <position position="74"/>
    </location>
    <ligand>
        <name>Mg(2+)</name>
        <dbReference type="ChEBI" id="CHEBI:18420"/>
    </ligand>
</feature>
<feature type="binding site" evidence="2">
    <location>
        <position position="143"/>
    </location>
    <ligand>
        <name>GTP</name>
        <dbReference type="ChEBI" id="CHEBI:37565"/>
    </ligand>
</feature>
<feature type="binding site" evidence="2">
    <location>
        <position position="147"/>
    </location>
    <ligand>
        <name>GTP</name>
        <dbReference type="ChEBI" id="CHEBI:37565"/>
    </ligand>
</feature>
<feature type="binding site" evidence="2">
    <location>
        <position position="148"/>
    </location>
    <ligand>
        <name>GTP</name>
        <dbReference type="ChEBI" id="CHEBI:37565"/>
    </ligand>
</feature>
<feature type="binding site" evidence="2">
    <location>
        <position position="149"/>
    </location>
    <ligand>
        <name>GTP</name>
        <dbReference type="ChEBI" id="CHEBI:37565"/>
    </ligand>
</feature>
<feature type="binding site" evidence="2">
    <location>
        <position position="209"/>
    </location>
    <ligand>
        <name>GTP</name>
        <dbReference type="ChEBI" id="CHEBI:37565"/>
    </ligand>
</feature>
<feature type="binding site" evidence="2">
    <location>
        <position position="231"/>
    </location>
    <ligand>
        <name>GTP</name>
        <dbReference type="ChEBI" id="CHEBI:37565"/>
    </ligand>
</feature>
<comment type="function">
    <text>Tubulin is the major constituent of microtubules, a cylinder consisting of laterally associated linear protofilaments composed of alpha- and beta-tubulin heterodimers. Microtubules grow by the addition of GTP-tubulin dimers to the microtubule end, where a stabilizing cap forms. Below the cap, tubulin dimers are in GDP-bound state, owing to GTPase activity of alpha-tubulin.</text>
</comment>
<comment type="cofactor">
    <cofactor evidence="1">
        <name>Mg(2+)</name>
        <dbReference type="ChEBI" id="CHEBI:18420"/>
    </cofactor>
</comment>
<comment type="subunit">
    <text>Dimer of alpha and beta chains. A typical microtubule is a hollow water-filled tube with an outer diameter of 25 nm and an inner diameter of 15 nM. Alpha-beta heterodimers associate head-to-tail to form protofilaments running lengthwise along the microtubule wall with the beta-tubulin subunit facing the microtubule plus end conferring a structural polarity. Microtubules usually have 13 protofilaments but different protofilament numbers can be found in some organisms and specialized cells.</text>
</comment>
<comment type="subcellular location">
    <subcellularLocation>
        <location>Cytoplasm</location>
        <location>Cytoskeleton</location>
    </subcellularLocation>
</comment>
<comment type="similarity">
    <text evidence="4">Belongs to the tubulin family.</text>
</comment>
<keyword id="KW-0963">Cytoplasm</keyword>
<keyword id="KW-0206">Cytoskeleton</keyword>
<keyword id="KW-0342">GTP-binding</keyword>
<keyword id="KW-0460">Magnesium</keyword>
<keyword id="KW-0479">Metal-binding</keyword>
<keyword id="KW-0493">Microtubule</keyword>
<keyword id="KW-0547">Nucleotide-binding</keyword>
<sequence>MREIVHIQTGQCGNQIGTKFWEIISDEHGIQPTGEYTTGVEKDLMELQLERINVYYNEGNQGKYVPRAVLVDLEPGTMDSVRAGPHGQLFKPDSFVFGQSGAGNNWAKGHYTEGAELVDSVLDVVRKKSEKCDCLQGFQLTHSLGGVTGSGMGTLLVSKILEEFPDRIMVTFSVVPSPKVSDTVVEPYNATLSIHQLVENTDETYCIDNEALYDICFRTLKLQNPTYGDLNHLVSLTMSGVTTCLRFPGQLNADLRKLAVNMVPFPRLHFFMPGFAPLTARGSQQYRALTVPELTQQMFDAKNMMAACDPRHGRYLTVAAIFRGRMSMREVDDQMYNIQNKNSSFFVEWIPNNVKTAVCDIPPRGLKMSATFIGNSTAIQELFKRVSEQFTAMFRRKAFLHWYTGEGMDEMEFTEAESNMNDLVSEYQQYQEATADDEAEFEEEGEVEGEYD</sequence>
<accession>Q94571</accession>